<accession>P37690</accession>
<accession>Q2M7S7</accession>
<reference key="1">
    <citation type="journal article" date="1994" name="Nucleic Acids Res.">
        <title>Analysis of the Escherichia coli genome. V. DNA sequence of the region from 76.0 to 81.5 minutes.</title>
        <authorList>
            <person name="Sofia H.J."/>
            <person name="Burland V."/>
            <person name="Daniels D.L."/>
            <person name="Plunkett G. III"/>
            <person name="Blattner F.R."/>
        </authorList>
    </citation>
    <scope>NUCLEOTIDE SEQUENCE [LARGE SCALE GENOMIC DNA]</scope>
    <source>
        <strain>K12 / MG1655 / ATCC 47076</strain>
    </source>
</reference>
<reference key="2">
    <citation type="journal article" date="1997" name="Science">
        <title>The complete genome sequence of Escherichia coli K-12.</title>
        <authorList>
            <person name="Blattner F.R."/>
            <person name="Plunkett G. III"/>
            <person name="Bloch C.A."/>
            <person name="Perna N.T."/>
            <person name="Burland V."/>
            <person name="Riley M."/>
            <person name="Collado-Vides J."/>
            <person name="Glasner J.D."/>
            <person name="Rode C.K."/>
            <person name="Mayhew G.F."/>
            <person name="Gregor J."/>
            <person name="Davis N.W."/>
            <person name="Kirkpatrick H.A."/>
            <person name="Goeden M.A."/>
            <person name="Rose D.J."/>
            <person name="Mau B."/>
            <person name="Shao Y."/>
        </authorList>
    </citation>
    <scope>NUCLEOTIDE SEQUENCE [LARGE SCALE GENOMIC DNA]</scope>
    <source>
        <strain>K12 / MG1655 / ATCC 47076</strain>
    </source>
</reference>
<reference key="3">
    <citation type="journal article" date="2006" name="Mol. Syst. Biol.">
        <title>Highly accurate genome sequences of Escherichia coli K-12 strains MG1655 and W3110.</title>
        <authorList>
            <person name="Hayashi K."/>
            <person name="Morooka N."/>
            <person name="Yamamoto Y."/>
            <person name="Fujita K."/>
            <person name="Isono K."/>
            <person name="Choi S."/>
            <person name="Ohtsubo E."/>
            <person name="Baba T."/>
            <person name="Wanner B.L."/>
            <person name="Mori H."/>
            <person name="Horiuchi T."/>
        </authorList>
    </citation>
    <scope>NUCLEOTIDE SEQUENCE [LARGE SCALE GENOMIC DNA]</scope>
    <source>
        <strain>K12 / W3110 / ATCC 27325 / DSM 5911</strain>
    </source>
</reference>
<reference key="4">
    <citation type="journal article" date="2002" name="FEMS Microbiol. Lett.">
        <title>Identification and characterization of the Escherichia coli envC gene encoding a periplasmic coiled-coil protein with putative peptidase activity.</title>
        <authorList>
            <person name="Hara H."/>
            <person name="Narita S."/>
            <person name="Karibian D."/>
            <person name="Park J.T."/>
            <person name="Yamamoto Y."/>
            <person name="Nishimura Y."/>
        </authorList>
    </citation>
    <scope>SUBCELLULAR LOCATION</scope>
    <scope>DISRUPTION PHENOTYPE</scope>
    <source>
        <strain>K12</strain>
    </source>
</reference>
<reference key="5">
    <citation type="journal article" date="2002" name="J. Bacteriol.">
        <title>Proteolytic activity of YibP protein in Escherichia coli.</title>
        <authorList>
            <person name="Ichimura T."/>
            <person name="Yamazoe M."/>
            <person name="Maeda M."/>
            <person name="Wada C."/>
            <person name="Hiraga S."/>
        </authorList>
    </citation>
    <scope>FUNCTION AS A PROTEASE</scope>
    <scope>DISRUPTION PHENOTYPE</scope>
    <source>
        <strain>K12 / W3110 / ATCC 27325 / DSM 5911</strain>
    </source>
</reference>
<reference key="6">
    <citation type="journal article" date="2004" name="Mol. Microbiol.">
        <title>Screening for synthetic lethal mutants in Escherichia coli and identification of EnvC (YibP) as a periplasmic septal ring factor with murein hydrolase activity.</title>
        <authorList>
            <person name="Bernhardt T.G."/>
            <person name="de Boer P.A."/>
        </authorList>
    </citation>
    <scope>FUNCTION</scope>
    <scope>SUBCELLULAR LOCATION</scope>
    <scope>DISRUPTION PHENOTYPE</scope>
    <source>
        <strain>K12</strain>
    </source>
</reference>
<reference key="7">
    <citation type="journal article" date="2009" name="J. Bacteriol.">
        <title>LytM-domain factors are required for daughter cell separation and rapid ampicillin-induced lysis in Escherichia coli.</title>
        <authorList>
            <person name="Uehara T."/>
            <person name="Dinh T."/>
            <person name="Bernhardt T.G."/>
        </authorList>
    </citation>
    <scope>FUNCTION</scope>
    <scope>SUBCELLULAR LOCATION</scope>
    <scope>DISRUPTION PHENOTYPE</scope>
    <source>
        <strain>K12 / MG1655 / TB28</strain>
    </source>
</reference>
<reference key="8">
    <citation type="journal article" date="2010" name="EMBO J.">
        <title>Daughter cell separation is controlled by cytokinetic ring-activated cell wall hydrolysis.</title>
        <authorList>
            <person name="Uehara T."/>
            <person name="Parzych K.R."/>
            <person name="Dinh T."/>
            <person name="Bernhardt T.G."/>
        </authorList>
    </citation>
    <scope>FUNCTION AS AN ACTIVATOR</scope>
    <scope>DOMAIN</scope>
    <source>
        <strain>K12 / MG1655 / ATCC 47076</strain>
    </source>
</reference>
<reference key="9">
    <citation type="journal article" date="2013" name="Mol. Microbiol.">
        <title>Structure-function analysis of the LytM domain of EnvC, an activator of cell wall remodelling at the Escherichia coli division site.</title>
        <authorList>
            <person name="Peters N.T."/>
            <person name="Morlot C."/>
            <person name="Yang D.C."/>
            <person name="Uehara T."/>
            <person name="Vernet T."/>
            <person name="Bernhardt T.G."/>
        </authorList>
    </citation>
    <scope>X-RAY CRYSTALLOGRAPHY (1.57 ANGSTROMS) OF 278-419</scope>
    <scope>FUNCTION</scope>
    <scope>MUTAGENESIS OF LYS-321; VAL-324; TYR-350; VAL-353; TYR-366; TYR-401 AND ARG-405</scope>
    <source>
        <strain>K12 / MG1655 / TB28</strain>
    </source>
</reference>
<evidence type="ECO:0000255" key="1"/>
<evidence type="ECO:0000256" key="2">
    <source>
        <dbReference type="SAM" id="MobiDB-lite"/>
    </source>
</evidence>
<evidence type="ECO:0000269" key="3">
    <source>
    </source>
</evidence>
<evidence type="ECO:0000269" key="4">
    <source>
    </source>
</evidence>
<evidence type="ECO:0000269" key="5">
    <source>
    </source>
</evidence>
<evidence type="ECO:0000269" key="6">
    <source>
    </source>
</evidence>
<evidence type="ECO:0000269" key="7">
    <source>
    </source>
</evidence>
<evidence type="ECO:0000269" key="8">
    <source>
    </source>
</evidence>
<evidence type="ECO:0000305" key="9"/>
<evidence type="ECO:0000305" key="10">
    <source>
    </source>
</evidence>
<evidence type="ECO:0000305" key="11">
    <source>
    </source>
</evidence>
<evidence type="ECO:0007829" key="12">
    <source>
        <dbReference type="PDB" id="4BH5"/>
    </source>
</evidence>
<evidence type="ECO:0007829" key="13">
    <source>
        <dbReference type="PDB" id="6TPI"/>
    </source>
</evidence>
<feature type="signal peptide" evidence="1">
    <location>
        <begin position="1"/>
        <end position="34"/>
    </location>
</feature>
<feature type="chain" id="PRO_0000169611" description="Murein hydrolase activator EnvC">
    <location>
        <begin position="35"/>
        <end position="419"/>
    </location>
</feature>
<feature type="region of interest" description="Disordered" evidence="2">
    <location>
        <begin position="252"/>
        <end position="290"/>
    </location>
</feature>
<feature type="coiled-coil region" evidence="1">
    <location>
        <begin position="35"/>
        <end position="124"/>
    </location>
</feature>
<feature type="coiled-coil region" evidence="1">
    <location>
        <begin position="155"/>
        <end position="271"/>
    </location>
</feature>
<feature type="compositionally biased region" description="Basic and acidic residues" evidence="2">
    <location>
        <begin position="252"/>
        <end position="270"/>
    </location>
</feature>
<feature type="mutagenesis site" description="Retains AmiA and AmiB activation." evidence="8">
    <original>K</original>
    <variation>A</variation>
    <location>
        <position position="321"/>
    </location>
</feature>
<feature type="mutagenesis site" description="Loss of AmiA and AmiB activation; does not complement double envC-nlpD disruption, protein localizes normally." evidence="8">
    <original>K</original>
    <variation>E</variation>
    <location>
        <position position="321"/>
    </location>
</feature>
<feature type="mutagenesis site" description="Retains AmiA and AmiB activation." evidence="8">
    <original>V</original>
    <variation>A</variation>
    <location>
        <position position="324"/>
    </location>
</feature>
<feature type="mutagenesis site" description="Loss of AmiA and AmiB activation; does not complement double envC-nlpD disruption, protein localizes normally." evidence="8">
    <original>V</original>
    <variation>E</variation>
    <location>
        <position position="324"/>
    </location>
</feature>
<feature type="mutagenesis site" description="Loss of AmiA and AmiB activation; does not complement double envC-nlpD disruption, protein localizes normally." evidence="8">
    <original>Y</original>
    <variation>A</variation>
    <location>
        <position position="350"/>
    </location>
</feature>
<feature type="mutagenesis site" description="Loss of AmiA and AmiB activation; does not complement double envC-nlpD disruption, protein localizes normally." evidence="8">
    <original>V</original>
    <variation>A</variation>
    <location>
        <position position="353"/>
    </location>
</feature>
<feature type="mutagenesis site" description="Partially unstable, loss of AmiA and AmiB activation." evidence="8">
    <original>Y</original>
    <variation>H</variation>
    <location>
        <position position="366"/>
    </location>
</feature>
<feature type="mutagenesis site" description="Partially unstable, loss of AmiA and AmiB activation; does not complement double envC-nlpD disruption, protein localizes normally." evidence="8">
    <original>Y</original>
    <variation>E</variation>
    <location>
        <position position="401"/>
    </location>
</feature>
<feature type="mutagenesis site" description="Loss of activation of amidases; does not complement double envC-nlpD disruption, protein localizes normally." evidence="8">
    <original>R</original>
    <variation>H</variation>
    <location>
        <position position="405"/>
    </location>
</feature>
<feature type="helix" evidence="13">
    <location>
        <begin position="41"/>
        <end position="126"/>
    </location>
</feature>
<feature type="turn" evidence="13">
    <location>
        <begin position="127"/>
        <end position="131"/>
    </location>
</feature>
<feature type="helix" evidence="13">
    <location>
        <begin position="135"/>
        <end position="138"/>
    </location>
</feature>
<feature type="helix" evidence="13">
    <location>
        <begin position="144"/>
        <end position="217"/>
    </location>
</feature>
<feature type="helix" evidence="13">
    <location>
        <begin position="222"/>
        <end position="264"/>
    </location>
</feature>
<feature type="helix" evidence="13">
    <location>
        <begin position="266"/>
        <end position="269"/>
    </location>
</feature>
<feature type="turn" evidence="13">
    <location>
        <begin position="270"/>
        <end position="272"/>
    </location>
</feature>
<feature type="helix" evidence="13">
    <location>
        <begin position="279"/>
        <end position="288"/>
    </location>
</feature>
<feature type="strand" evidence="12">
    <location>
        <begin position="293"/>
        <end position="296"/>
    </location>
</feature>
<feature type="strand" evidence="12">
    <location>
        <begin position="306"/>
        <end position="308"/>
    </location>
</feature>
<feature type="strand" evidence="12">
    <location>
        <begin position="312"/>
        <end position="315"/>
    </location>
</feature>
<feature type="strand" evidence="12">
    <location>
        <begin position="321"/>
        <end position="326"/>
    </location>
</feature>
<feature type="strand" evidence="12">
    <location>
        <begin position="332"/>
        <end position="334"/>
    </location>
</feature>
<feature type="strand" evidence="12">
    <location>
        <begin position="336"/>
        <end position="346"/>
    </location>
</feature>
<feature type="strand" evidence="12">
    <location>
        <begin position="350"/>
        <end position="359"/>
    </location>
</feature>
<feature type="strand" evidence="12">
    <location>
        <begin position="362"/>
        <end position="374"/>
    </location>
</feature>
<feature type="strand" evidence="12">
    <location>
        <begin position="385"/>
        <end position="390"/>
    </location>
</feature>
<feature type="turn" evidence="13">
    <location>
        <begin position="392"/>
        <end position="394"/>
    </location>
</feature>
<feature type="strand" evidence="12">
    <location>
        <begin position="399"/>
        <end position="406"/>
    </location>
</feature>
<feature type="strand" evidence="12">
    <location>
        <begin position="409"/>
        <end position="411"/>
    </location>
</feature>
<feature type="helix" evidence="12">
    <location>
        <begin position="414"/>
        <end position="416"/>
    </location>
</feature>
<protein>
    <recommendedName>
        <fullName>Murein hydrolase activator EnvC</fullName>
    </recommendedName>
    <alternativeName>
        <fullName>Septal ring factor</fullName>
    </alternativeName>
</protein>
<keyword id="KW-0002">3D-structure</keyword>
<keyword id="KW-0131">Cell cycle</keyword>
<keyword id="KW-0132">Cell division</keyword>
<keyword id="KW-0175">Coiled coil</keyword>
<keyword id="KW-0574">Periplasm</keyword>
<keyword id="KW-1185">Reference proteome</keyword>
<keyword id="KW-0732">Signal</keyword>
<proteinExistence type="evidence at protein level"/>
<gene>
    <name type="primary">envC</name>
    <name type="synonym">yibP</name>
    <name type="ordered locus">b3613</name>
    <name type="ordered locus">JW5646</name>
</gene>
<organism>
    <name type="scientific">Escherichia coli (strain K12)</name>
    <dbReference type="NCBI Taxonomy" id="83333"/>
    <lineage>
        <taxon>Bacteria</taxon>
        <taxon>Pseudomonadati</taxon>
        <taxon>Pseudomonadota</taxon>
        <taxon>Gammaproteobacteria</taxon>
        <taxon>Enterobacterales</taxon>
        <taxon>Enterobacteriaceae</taxon>
        <taxon>Escherichia</taxon>
    </lineage>
</organism>
<name>ENVC_ECOLI</name>
<sequence length="419" mass="46595">MTRAVKPRRFAIRPIIYASVLSAGVLLCAFSAHADERDQLKSIQADIAAKERAVRQKQQQRASLLAQLKKQEEAISEATRKLRETQNTLNQLNKQIDEMNASIAKLEQQKAAQERSLAAQLDAAFRQGEHTGIQLILSGEESQRGQRLQAYFGYLNQARQETIAQLKQTREEVAMQRAELEEKQSEQQTLLYEQRAQQAKLTQALNERKKTLAGLESSIQQGQQQLSELRANESRLRNSIARAEAAAKARAEREAREAQAVRDRQKEATRKGTTYKPTESEKSLMSRTGGLGAPRGQAFWPVRGPTLHRYGEQLQGELRWKGMVIGASEGTEVKAIADGRVILADWLQGYGLVVVVEHGKGDMSLYGYNQSALVSVGSQVRAGQPIALVGSSGGQGRPSLYFEIRRQGQAVNPQPWLGR</sequence>
<dbReference type="EMBL" id="U00039">
    <property type="protein sequence ID" value="AAB18590.1"/>
    <property type="status" value="ALT_INIT"/>
    <property type="molecule type" value="Genomic_DNA"/>
</dbReference>
<dbReference type="EMBL" id="U00096">
    <property type="protein sequence ID" value="AAC76637.2"/>
    <property type="molecule type" value="Genomic_DNA"/>
</dbReference>
<dbReference type="EMBL" id="AP009048">
    <property type="protein sequence ID" value="BAE77679.1"/>
    <property type="molecule type" value="Genomic_DNA"/>
</dbReference>
<dbReference type="RefSeq" id="NP_418070.6">
    <property type="nucleotide sequence ID" value="NC_000913.3"/>
</dbReference>
<dbReference type="RefSeq" id="WP_000196256.1">
    <property type="nucleotide sequence ID" value="NZ_STEB01000024.1"/>
</dbReference>
<dbReference type="PDB" id="4BH5">
    <property type="method" value="X-ray"/>
    <property type="resolution" value="1.57 A"/>
    <property type="chains" value="A/B/C/D=278-419"/>
</dbReference>
<dbReference type="PDB" id="6TPI">
    <property type="method" value="X-ray"/>
    <property type="resolution" value="2.10 A"/>
    <property type="chains" value="A=35-419"/>
</dbReference>
<dbReference type="PDB" id="8HD0">
    <property type="method" value="EM"/>
    <property type="resolution" value="3.11 A"/>
    <property type="chains" value="E=1-419"/>
</dbReference>
<dbReference type="PDB" id="8W6J">
    <property type="method" value="EM"/>
    <property type="resolution" value="3.40 A"/>
    <property type="chains" value="E=1-419"/>
</dbReference>
<dbReference type="PDB" id="8Y3X">
    <property type="method" value="EM"/>
    <property type="resolution" value="3.11 A"/>
    <property type="chains" value="E=1-419"/>
</dbReference>
<dbReference type="PDBsum" id="4BH5"/>
<dbReference type="PDBsum" id="6TPI"/>
<dbReference type="PDBsum" id="8HD0"/>
<dbReference type="PDBsum" id="8W6J"/>
<dbReference type="PDBsum" id="8Y3X"/>
<dbReference type="EMDB" id="EMD-34668"/>
<dbReference type="EMDB" id="EMD-37325"/>
<dbReference type="EMDB" id="EMD-38906"/>
<dbReference type="SMR" id="P37690"/>
<dbReference type="BioGRID" id="4263303">
    <property type="interactions" value="381"/>
</dbReference>
<dbReference type="DIP" id="DIP-12426N"/>
<dbReference type="FunCoup" id="P37690">
    <property type="interactions" value="131"/>
</dbReference>
<dbReference type="IntAct" id="P37690">
    <property type="interactions" value="1"/>
</dbReference>
<dbReference type="STRING" id="511145.b3613"/>
<dbReference type="MEROPS" id="M23.950"/>
<dbReference type="jPOST" id="P37690"/>
<dbReference type="PaxDb" id="511145-b3613"/>
<dbReference type="DNASU" id="948129"/>
<dbReference type="EnsemblBacteria" id="AAC76637">
    <property type="protein sequence ID" value="AAC76637"/>
    <property type="gene ID" value="b3613"/>
</dbReference>
<dbReference type="GeneID" id="75202185"/>
<dbReference type="GeneID" id="948129"/>
<dbReference type="KEGG" id="ecj:JW5646"/>
<dbReference type="KEGG" id="eco:b3613"/>
<dbReference type="PATRIC" id="fig|1411691.4.peg.3093"/>
<dbReference type="EchoBASE" id="EB2205"/>
<dbReference type="eggNOG" id="COG4942">
    <property type="taxonomic scope" value="Bacteria"/>
</dbReference>
<dbReference type="HOGENOM" id="CLU_029425_4_0_6"/>
<dbReference type="InParanoid" id="P37690"/>
<dbReference type="OMA" id="SDPAQWC"/>
<dbReference type="PhylomeDB" id="P37690"/>
<dbReference type="BioCyc" id="EcoCyc:EG12297-MONOMER"/>
<dbReference type="BioCyc" id="MetaCyc:EG12297-MONOMER"/>
<dbReference type="EvolutionaryTrace" id="P37690"/>
<dbReference type="PRO" id="PR:P37690"/>
<dbReference type="Proteomes" id="UP000000625">
    <property type="component" value="Chromosome"/>
</dbReference>
<dbReference type="GO" id="GO:0032153">
    <property type="term" value="C:cell division site"/>
    <property type="evidence" value="ECO:0000314"/>
    <property type="project" value="EcoliWiki"/>
</dbReference>
<dbReference type="GO" id="GO:0030288">
    <property type="term" value="C:outer membrane-bounded periplasmic space"/>
    <property type="evidence" value="ECO:0000314"/>
    <property type="project" value="EcoCyc"/>
</dbReference>
<dbReference type="GO" id="GO:0042597">
    <property type="term" value="C:periplasmic space"/>
    <property type="evidence" value="ECO:0000314"/>
    <property type="project" value="EcoCyc"/>
</dbReference>
<dbReference type="GO" id="GO:0005886">
    <property type="term" value="C:plasma membrane"/>
    <property type="evidence" value="ECO:0000314"/>
    <property type="project" value="EcoCyc"/>
</dbReference>
<dbReference type="GO" id="GO:0016787">
    <property type="term" value="F:hydrolase activity"/>
    <property type="evidence" value="ECO:0000314"/>
    <property type="project" value="EcoliWiki"/>
</dbReference>
<dbReference type="GO" id="GO:0004222">
    <property type="term" value="F:metalloendopeptidase activity"/>
    <property type="evidence" value="ECO:0000318"/>
    <property type="project" value="GO_Central"/>
</dbReference>
<dbReference type="GO" id="GO:0009273">
    <property type="term" value="P:peptidoglycan-based cell wall biogenesis"/>
    <property type="evidence" value="ECO:0000315"/>
    <property type="project" value="EcoCyc"/>
</dbReference>
<dbReference type="GO" id="GO:0009314">
    <property type="term" value="P:response to radiation"/>
    <property type="evidence" value="ECO:0000315"/>
    <property type="project" value="EcoCyc"/>
</dbReference>
<dbReference type="GO" id="GO:0009410">
    <property type="term" value="P:response to xenobiotic stimulus"/>
    <property type="evidence" value="ECO:0000315"/>
    <property type="project" value="EcoCyc"/>
</dbReference>
<dbReference type="GO" id="GO:0000920">
    <property type="term" value="P:septum digestion after cytokinesis"/>
    <property type="evidence" value="ECO:0000315"/>
    <property type="project" value="EcoliWiki"/>
</dbReference>
<dbReference type="CDD" id="cd12797">
    <property type="entry name" value="M23_peptidase"/>
    <property type="match status" value="1"/>
</dbReference>
<dbReference type="FunFam" id="2.70.70.10:FF:000003">
    <property type="entry name" value="Murein hydrolase activator EnvC"/>
    <property type="match status" value="1"/>
</dbReference>
<dbReference type="Gene3D" id="6.10.250.3150">
    <property type="match status" value="1"/>
</dbReference>
<dbReference type="Gene3D" id="2.70.70.10">
    <property type="entry name" value="Glucose Permease (Domain IIA)"/>
    <property type="match status" value="1"/>
</dbReference>
<dbReference type="InterPro" id="IPR050570">
    <property type="entry name" value="Cell_wall_metabolism_enzyme"/>
</dbReference>
<dbReference type="InterPro" id="IPR011055">
    <property type="entry name" value="Dup_hybrid_motif"/>
</dbReference>
<dbReference type="InterPro" id="IPR016047">
    <property type="entry name" value="Peptidase_M23"/>
</dbReference>
<dbReference type="NCBIfam" id="NF008644">
    <property type="entry name" value="PRK11637.1"/>
    <property type="match status" value="1"/>
</dbReference>
<dbReference type="PANTHER" id="PTHR21666:SF270">
    <property type="entry name" value="MUREIN HYDROLASE ACTIVATOR ENVC"/>
    <property type="match status" value="1"/>
</dbReference>
<dbReference type="PANTHER" id="PTHR21666">
    <property type="entry name" value="PEPTIDASE-RELATED"/>
    <property type="match status" value="1"/>
</dbReference>
<dbReference type="Pfam" id="PF01551">
    <property type="entry name" value="Peptidase_M23"/>
    <property type="match status" value="1"/>
</dbReference>
<dbReference type="SUPFAM" id="SSF51261">
    <property type="entry name" value="Duplicated hybrid motif"/>
    <property type="match status" value="1"/>
</dbReference>
<comment type="function">
    <text evidence="3 5 6 7 8">Activator of the cell wall hydrolases AmiA and AmiB. Required for septal murein cleavage and daughter cell separation during cell division. In vitro, exhibits weak endoproteolytic activity on beta-casein.</text>
</comment>
<comment type="interaction">
    <interactant intactId="EBI-15948725">
        <id>P37690</id>
    </interactant>
    <interactant intactId="EBI-1119111">
        <id>P0AC30</id>
        <label>ftsX</label>
    </interactant>
    <organismsDiffer>false</organismsDiffer>
    <experiments>2</experiments>
</comment>
<comment type="subcellular location">
    <subcellularLocation>
        <location evidence="4 5 6">Periplasm</location>
    </subcellularLocation>
    <text>Localizes at the septal ring.</text>
</comment>
<comment type="domain">
    <text evidence="7">The coiled-coil domain is necessary and sufficient for recruitment to the divisome. The LytM domain is required for proper septal peptidoglycan splitting.</text>
</comment>
<comment type="disruption phenotype">
    <text evidence="3 4 5 6">Mutants show defects in septation and separation, and form very long filaments (1.5-fold increase). The phenotype is exacerbated when combined with nlpD (over 8-fold longer), more exacerbated with a triple mepM (yebA) or ygeR disruption (15-fold longer) and further yet by the quadruple disruption mutant (envC-nlpD-mepM(yebA)-ygeR, over 21-fold longer). Quadruple mutants are less sensitive to ampicillin lysis.</text>
</comment>
<comment type="similarity">
    <text evidence="9">Belongs to the peptidase M23B family.</text>
</comment>
<comment type="caution">
    <text evidence="10">Was originally thought to have murein hydrolase activity.</text>
</comment>
<comment type="caution">
    <text evidence="11">Unlike many members of this family does not have peptidase activity.</text>
</comment>
<comment type="sequence caution" evidence="9">
    <conflict type="erroneous initiation">
        <sequence resource="EMBL-CDS" id="AAB18590"/>
    </conflict>
    <text>Extended N-terminus.</text>
</comment>